<comment type="catalytic activity">
    <reaction>
        <text>a uridine in RNA = a pseudouridine in RNA</text>
        <dbReference type="Rhea" id="RHEA:48348"/>
        <dbReference type="Rhea" id="RHEA-COMP:12068"/>
        <dbReference type="Rhea" id="RHEA-COMP:12069"/>
        <dbReference type="ChEBI" id="CHEBI:65314"/>
        <dbReference type="ChEBI" id="CHEBI:65315"/>
    </reaction>
</comment>
<comment type="similarity">
    <text evidence="3">Belongs to the pseudouridine synthase RluA family.</text>
</comment>
<feature type="chain" id="PRO_0000162736" description="Uncharacterized RNA pseudouridine synthase jhp_0682">
    <location>
        <begin position="1"/>
        <end position="327"/>
    </location>
</feature>
<feature type="domain" description="S4 RNA-binding" evidence="2">
    <location>
        <begin position="12"/>
        <end position="79"/>
    </location>
</feature>
<feature type="active site" evidence="1">
    <location>
        <position position="136"/>
    </location>
</feature>
<dbReference type="EC" id="5.4.99.-"/>
<dbReference type="EMBL" id="AE001439">
    <property type="protein sequence ID" value="AAD06270.1"/>
    <property type="molecule type" value="Genomic_DNA"/>
</dbReference>
<dbReference type="PIR" id="B71900">
    <property type="entry name" value="B71900"/>
</dbReference>
<dbReference type="RefSeq" id="WP_001174338.1">
    <property type="nucleotide sequence ID" value="NC_000921.1"/>
</dbReference>
<dbReference type="SMR" id="Q9ZL98"/>
<dbReference type="KEGG" id="hpj:jhp_0682"/>
<dbReference type="PATRIC" id="fig|85963.30.peg.297"/>
<dbReference type="eggNOG" id="COG0564">
    <property type="taxonomic scope" value="Bacteria"/>
</dbReference>
<dbReference type="Proteomes" id="UP000000804">
    <property type="component" value="Chromosome"/>
</dbReference>
<dbReference type="GO" id="GO:0003723">
    <property type="term" value="F:RNA binding"/>
    <property type="evidence" value="ECO:0007669"/>
    <property type="project" value="UniProtKB-KW"/>
</dbReference>
<dbReference type="GO" id="GO:0120159">
    <property type="term" value="F:rRNA pseudouridine synthase activity"/>
    <property type="evidence" value="ECO:0007669"/>
    <property type="project" value="UniProtKB-ARBA"/>
</dbReference>
<dbReference type="GO" id="GO:0000455">
    <property type="term" value="P:enzyme-directed rRNA pseudouridine synthesis"/>
    <property type="evidence" value="ECO:0007669"/>
    <property type="project" value="UniProtKB-ARBA"/>
</dbReference>
<dbReference type="CDD" id="cd02869">
    <property type="entry name" value="PseudoU_synth_RluA_like"/>
    <property type="match status" value="1"/>
</dbReference>
<dbReference type="CDD" id="cd00165">
    <property type="entry name" value="S4"/>
    <property type="match status" value="1"/>
</dbReference>
<dbReference type="FunFam" id="3.10.290.10:FF:000053">
    <property type="entry name" value="Uncharacterized RNA pseudouridine synthase jhp_0682"/>
    <property type="match status" value="1"/>
</dbReference>
<dbReference type="Gene3D" id="3.30.2350.10">
    <property type="entry name" value="Pseudouridine synthase"/>
    <property type="match status" value="1"/>
</dbReference>
<dbReference type="Gene3D" id="3.10.290.10">
    <property type="entry name" value="RNA-binding S4 domain"/>
    <property type="match status" value="1"/>
</dbReference>
<dbReference type="InterPro" id="IPR020103">
    <property type="entry name" value="PsdUridine_synth_cat_dom_sf"/>
</dbReference>
<dbReference type="InterPro" id="IPR006224">
    <property type="entry name" value="PsdUridine_synth_RluA-like_CS"/>
</dbReference>
<dbReference type="InterPro" id="IPR006225">
    <property type="entry name" value="PsdUridine_synth_RluC/D"/>
</dbReference>
<dbReference type="InterPro" id="IPR006145">
    <property type="entry name" value="PsdUridine_synth_RsuA/RluA"/>
</dbReference>
<dbReference type="InterPro" id="IPR050188">
    <property type="entry name" value="RluA_PseudoU_synthase"/>
</dbReference>
<dbReference type="InterPro" id="IPR002942">
    <property type="entry name" value="S4_RNA-bd"/>
</dbReference>
<dbReference type="InterPro" id="IPR036986">
    <property type="entry name" value="S4_RNA-bd_sf"/>
</dbReference>
<dbReference type="NCBIfam" id="TIGR00005">
    <property type="entry name" value="rluA_subfam"/>
    <property type="match status" value="1"/>
</dbReference>
<dbReference type="PANTHER" id="PTHR21600">
    <property type="entry name" value="MITOCHONDRIAL RNA PSEUDOURIDINE SYNTHASE"/>
    <property type="match status" value="1"/>
</dbReference>
<dbReference type="PANTHER" id="PTHR21600:SF44">
    <property type="entry name" value="RIBOSOMAL LARGE SUBUNIT PSEUDOURIDINE SYNTHASE D"/>
    <property type="match status" value="1"/>
</dbReference>
<dbReference type="Pfam" id="PF00849">
    <property type="entry name" value="PseudoU_synth_2"/>
    <property type="match status" value="1"/>
</dbReference>
<dbReference type="Pfam" id="PF01479">
    <property type="entry name" value="S4"/>
    <property type="match status" value="1"/>
</dbReference>
<dbReference type="SMART" id="SM00363">
    <property type="entry name" value="S4"/>
    <property type="match status" value="1"/>
</dbReference>
<dbReference type="SUPFAM" id="SSF55174">
    <property type="entry name" value="Alpha-L RNA-binding motif"/>
    <property type="match status" value="1"/>
</dbReference>
<dbReference type="SUPFAM" id="SSF55120">
    <property type="entry name" value="Pseudouridine synthase"/>
    <property type="match status" value="1"/>
</dbReference>
<dbReference type="PROSITE" id="PS01129">
    <property type="entry name" value="PSI_RLU"/>
    <property type="match status" value="1"/>
</dbReference>
<dbReference type="PROSITE" id="PS50889">
    <property type="entry name" value="S4"/>
    <property type="match status" value="1"/>
</dbReference>
<name>Y745_HELPJ</name>
<reference key="1">
    <citation type="journal article" date="1999" name="Nature">
        <title>Genomic sequence comparison of two unrelated isolates of the human gastric pathogen Helicobacter pylori.</title>
        <authorList>
            <person name="Alm R.A."/>
            <person name="Ling L.-S.L."/>
            <person name="Moir D.T."/>
            <person name="King B.L."/>
            <person name="Brown E.D."/>
            <person name="Doig P.C."/>
            <person name="Smith D.R."/>
            <person name="Noonan B."/>
            <person name="Guild B.C."/>
            <person name="deJonge B.L."/>
            <person name="Carmel G."/>
            <person name="Tummino P.J."/>
            <person name="Caruso A."/>
            <person name="Uria-Nickelsen M."/>
            <person name="Mills D.M."/>
            <person name="Ives C."/>
            <person name="Gibson R."/>
            <person name="Merberg D."/>
            <person name="Mills S.D."/>
            <person name="Jiang Q."/>
            <person name="Taylor D.E."/>
            <person name="Vovis G.F."/>
            <person name="Trust T.J."/>
        </authorList>
    </citation>
    <scope>NUCLEOTIDE SEQUENCE [LARGE SCALE GENOMIC DNA]</scope>
    <source>
        <strain>J99 / ATCC 700824</strain>
    </source>
</reference>
<accession>Q9ZL98</accession>
<evidence type="ECO:0000250" key="1"/>
<evidence type="ECO:0000255" key="2">
    <source>
        <dbReference type="PROSITE-ProRule" id="PRU00182"/>
    </source>
</evidence>
<evidence type="ECO:0000305" key="3"/>
<gene>
    <name type="ordered locus">jhp_0682</name>
</gene>
<proteinExistence type="inferred from homology"/>
<protein>
    <recommendedName>
        <fullName>Uncharacterized RNA pseudouridine synthase jhp_0682</fullName>
        <ecNumber>5.4.99.-</ecNumber>
    </recommendedName>
    <alternativeName>
        <fullName>RNA pseudouridylate synthase</fullName>
    </alternativeName>
    <alternativeName>
        <fullName>RNA-uridine isomerase</fullName>
    </alternativeName>
</protein>
<keyword id="KW-0413">Isomerase</keyword>
<keyword id="KW-0694">RNA-binding</keyword>
<organism>
    <name type="scientific">Helicobacter pylori (strain J99 / ATCC 700824)</name>
    <name type="common">Campylobacter pylori J99</name>
    <dbReference type="NCBI Taxonomy" id="85963"/>
    <lineage>
        <taxon>Bacteria</taxon>
        <taxon>Pseudomonadati</taxon>
        <taxon>Campylobacterota</taxon>
        <taxon>Epsilonproteobacteria</taxon>
        <taxon>Campylobacterales</taxon>
        <taxon>Helicobacteraceae</taxon>
        <taxon>Helicobacter</taxon>
    </lineage>
</organism>
<sequence length="327" mass="37722">MQKVFIAPTHYKRIDEFLAKELQISKNQVLNLIKEGLVFCQKKEVKKGGLALKEGDAITLLTPKIVPKPLKKELDLEIEVIFEDEDLLVLNKPPNLVVHKAPSVKEPTLVDWLKSQNYELSNLGLKERYGIVHRLDKDTSGGIVIAKNNFTHVCLSEQLKTKMMGRYYIALLSTPLKEEKMSVECYLTRNPNNRLKMIALKAAKKEKSRYSKSEFTSLLTSQNGMDLIGAKLFTGRTHQIRAHLEYLNRHIIGDNLYGLNGVLSKEEIRIMLHAYLIEFKHPRSEQKLRFKVPLLKDMLEYLKKVFDKENLDEVLDEEKILHAFIAK</sequence>